<feature type="signal peptide" evidence="1">
    <location>
        <begin position="1"/>
        <end position="26"/>
    </location>
</feature>
<feature type="propeptide" id="PRO_0000447053" evidence="7">
    <location>
        <begin position="27"/>
        <end position="36"/>
    </location>
</feature>
<feature type="peptide" id="PRO_0000447054" description="U7-myrmicitoxin-Tb1a" evidence="2">
    <location>
        <begin position="37"/>
        <end position="54"/>
    </location>
</feature>
<feature type="disulfide bond" evidence="2">
    <location>
        <begin position="40"/>
        <end position="49"/>
    </location>
</feature>
<organism>
    <name type="scientific">Tetramorium bicarinatum</name>
    <name type="common">Tramp ant</name>
    <dbReference type="NCBI Taxonomy" id="219812"/>
    <lineage>
        <taxon>Eukaryota</taxon>
        <taxon>Metazoa</taxon>
        <taxon>Ecdysozoa</taxon>
        <taxon>Arthropoda</taxon>
        <taxon>Hexapoda</taxon>
        <taxon>Insecta</taxon>
        <taxon>Pterygota</taxon>
        <taxon>Neoptera</taxon>
        <taxon>Endopterygota</taxon>
        <taxon>Hymenoptera</taxon>
        <taxon>Apocrita</taxon>
        <taxon>Aculeata</taxon>
        <taxon>Formicoidea</taxon>
        <taxon>Formicidae</taxon>
        <taxon>Myrmicinae</taxon>
        <taxon>Tetramorium</taxon>
    </lineage>
</organism>
<sequence>MQLSHLLLAFAMIFVMTIIHTPQVQADAMADADADAAINCRRYPRHPKCRGVSA</sequence>
<reference evidence="9" key="1">
    <citation type="journal article" date="2013" name="Toxicon">
        <title>Profiling the venom gland transcriptome of Tetramorium bicarinatum (Hymenoptera: Formicidae): the first transcriptome analysis of an ant species.</title>
        <authorList>
            <person name="Bouzid W."/>
            <person name="Klopp C."/>
            <person name="Verdenaud M."/>
            <person name="Ducancel F."/>
            <person name="Vetillard A."/>
        </authorList>
    </citation>
    <scope>NUCLEOTIDE SEQUENCE [MRNA]</scope>
    <source>
        <tissue>Venom gland</tissue>
    </source>
</reference>
<reference key="2">
    <citation type="journal article" date="2018" name="J. Proteome Res.">
        <title>Deciphering the Molecular Diversity of an Ant Venom Peptidome through a Venomics Approach.</title>
        <authorList>
            <person name="Touchard A."/>
            <person name="Tene N."/>
            <person name="Song P.C.T."/>
            <person name="Lefranc B."/>
            <person name="Leprince J."/>
            <person name="Treilhou M."/>
            <person name="Bonnafe E."/>
        </authorList>
    </citation>
    <scope>PROTEIN SEQUENCE OF 37-54</scope>
    <scope>MASS SPECTROMETRY</scope>
    <scope>SUBCELLULAR LOCATION</scope>
    <source>
        <tissue>Venom</tissue>
    </source>
</reference>
<reference key="3">
    <citation type="journal article" date="2018" name="Sci. Adv.">
        <title>A comprehensive portrait of the venom of the giant red bull ant, Myrmecia gulosa, reveals a hyperdiverse hymenopteran toxin gene family.</title>
        <authorList>
            <person name="Robinson S.D."/>
            <person name="Mueller A."/>
            <person name="Clayton D."/>
            <person name="Starobova H."/>
            <person name="Hamilton B.R."/>
            <person name="Payne R.J."/>
            <person name="Vetter I."/>
            <person name="King G.F."/>
            <person name="Undheim E.A.B."/>
        </authorList>
    </citation>
    <scope>NOMENCLATURE</scope>
</reference>
<reference key="4">
    <citation type="journal article" date="2023" name="Toxins">
        <title>Discovery of an insect neuroactive helix ring peptide from ant venom.</title>
        <authorList>
            <person name="Barasse V."/>
            <person name="Jouvensal L."/>
            <person name="Boy G."/>
            <person name="Billet A."/>
            <person name="Ascoet S."/>
            <person name="Lefranc B."/>
            <person name="Leprince J."/>
            <person name="Dejean A."/>
            <person name="Lacotte V."/>
            <person name="Rahioui I."/>
            <person name="Sivignon C."/>
            <person name="Gaget K."/>
            <person name="Ribeiro Lopes M."/>
            <person name="Calevro F."/>
            <person name="Da Silva P."/>
            <person name="Loth K."/>
            <person name="Paquet F."/>
            <person name="Treilhou M."/>
            <person name="Bonnafe E."/>
            <person name="Touchard A."/>
        </authorList>
    </citation>
    <scope>SYNTHESIS OF 37-54</scope>
</reference>
<proteinExistence type="evidence at protein level"/>
<protein>
    <recommendedName>
        <fullName evidence="4 6">U7-myrmicitoxin-Tb1a</fullName>
        <shortName evidence="4 6">U7-MYRTX-Tb1a</shortName>
    </recommendedName>
    <alternativeName>
        <fullName evidence="7">U-myrmicitoxin(01)-Tb4a</fullName>
        <shortName evidence="5">MYRTX(01)-Tb4</shortName>
        <shortName evidence="7">U-MYRTX(01)-Tb4a</shortName>
    </alternativeName>
</protein>
<dbReference type="EMBL" id="JZ168710">
    <property type="status" value="NOT_ANNOTATED_CDS"/>
    <property type="molecule type" value="mRNA"/>
</dbReference>
<dbReference type="GO" id="GO:0005576">
    <property type="term" value="C:extracellular region"/>
    <property type="evidence" value="ECO:0007669"/>
    <property type="project" value="UniProtKB-SubCell"/>
</dbReference>
<dbReference type="GO" id="GO:0090729">
    <property type="term" value="F:toxin activity"/>
    <property type="evidence" value="ECO:0007669"/>
    <property type="project" value="UniProtKB-KW"/>
</dbReference>
<dbReference type="InterPro" id="IPR049518">
    <property type="entry name" value="Pilosulin"/>
</dbReference>
<dbReference type="Pfam" id="PF17499">
    <property type="entry name" value="Pilosulin"/>
    <property type="match status" value="1"/>
</dbReference>
<keyword id="KW-0903">Direct protein sequencing</keyword>
<keyword id="KW-1015">Disulfide bond</keyword>
<keyword id="KW-0964">Secreted</keyword>
<keyword id="KW-0732">Signal</keyword>
<keyword id="KW-0800">Toxin</keyword>
<evidence type="ECO:0000255" key="1"/>
<evidence type="ECO:0000269" key="2">
    <source>
    </source>
</evidence>
<evidence type="ECO:0000269" key="3">
    <source>
    </source>
</evidence>
<evidence type="ECO:0000303" key="4">
    <source>
    </source>
</evidence>
<evidence type="ECO:0000303" key="5">
    <source>
    </source>
</evidence>
<evidence type="ECO:0000303" key="6">
    <source>
    </source>
</evidence>
<evidence type="ECO:0000305" key="7"/>
<evidence type="ECO:0000305" key="8">
    <source>
    </source>
</evidence>
<evidence type="ECO:0000312" key="9">
    <source>
        <dbReference type="EMBL" id="JZ168710"/>
    </source>
</evidence>
<comment type="function">
    <text evidence="3">Venom protein with unknown function. Does not induce paralysis when a high dose is administered by intrathoracic injection into the blowfly Lucilia caesar.</text>
</comment>
<comment type="subcellular location">
    <subcellularLocation>
        <location evidence="2">Secreted</location>
    </subcellularLocation>
</comment>
<comment type="tissue specificity">
    <text evidence="8">Expressed by the venom gland.</text>
</comment>
<comment type="mass spectrometry"/>
<comment type="similarity">
    <text evidence="7">Belongs to the formicidae venom precursor-01 superfamily.</text>
</comment>
<name>TX7A_TETBN</name>
<accession>P0DSI5</accession>